<feature type="chain" id="PRO_1000026282" description="Nucleoside diphosphate kinase">
    <location>
        <begin position="1"/>
        <end position="140"/>
    </location>
</feature>
<feature type="active site" description="Pros-phosphohistidine intermediate" evidence="1">
    <location>
        <position position="117"/>
    </location>
</feature>
<feature type="binding site" evidence="1">
    <location>
        <position position="11"/>
    </location>
    <ligand>
        <name>ATP</name>
        <dbReference type="ChEBI" id="CHEBI:30616"/>
    </ligand>
</feature>
<feature type="binding site" evidence="1">
    <location>
        <position position="59"/>
    </location>
    <ligand>
        <name>ATP</name>
        <dbReference type="ChEBI" id="CHEBI:30616"/>
    </ligand>
</feature>
<feature type="binding site" evidence="1">
    <location>
        <position position="87"/>
    </location>
    <ligand>
        <name>ATP</name>
        <dbReference type="ChEBI" id="CHEBI:30616"/>
    </ligand>
</feature>
<feature type="binding site" evidence="1">
    <location>
        <position position="93"/>
    </location>
    <ligand>
        <name>ATP</name>
        <dbReference type="ChEBI" id="CHEBI:30616"/>
    </ligand>
</feature>
<feature type="binding site" evidence="1">
    <location>
        <position position="104"/>
    </location>
    <ligand>
        <name>ATP</name>
        <dbReference type="ChEBI" id="CHEBI:30616"/>
    </ligand>
</feature>
<feature type="binding site" evidence="1">
    <location>
        <position position="114"/>
    </location>
    <ligand>
        <name>ATP</name>
        <dbReference type="ChEBI" id="CHEBI:30616"/>
    </ligand>
</feature>
<accession>Q07LG4</accession>
<organism>
    <name type="scientific">Rhodopseudomonas palustris (strain BisA53)</name>
    <dbReference type="NCBI Taxonomy" id="316055"/>
    <lineage>
        <taxon>Bacteria</taxon>
        <taxon>Pseudomonadati</taxon>
        <taxon>Pseudomonadota</taxon>
        <taxon>Alphaproteobacteria</taxon>
        <taxon>Hyphomicrobiales</taxon>
        <taxon>Nitrobacteraceae</taxon>
        <taxon>Rhodopseudomonas</taxon>
    </lineage>
</organism>
<name>NDK_RHOP5</name>
<comment type="function">
    <text evidence="1">Major role in the synthesis of nucleoside triphosphates other than ATP. The ATP gamma phosphate is transferred to the NDP beta phosphate via a ping-pong mechanism, using a phosphorylated active-site intermediate.</text>
</comment>
<comment type="catalytic activity">
    <reaction evidence="1">
        <text>a 2'-deoxyribonucleoside 5'-diphosphate + ATP = a 2'-deoxyribonucleoside 5'-triphosphate + ADP</text>
        <dbReference type="Rhea" id="RHEA:44640"/>
        <dbReference type="ChEBI" id="CHEBI:30616"/>
        <dbReference type="ChEBI" id="CHEBI:61560"/>
        <dbReference type="ChEBI" id="CHEBI:73316"/>
        <dbReference type="ChEBI" id="CHEBI:456216"/>
        <dbReference type="EC" id="2.7.4.6"/>
    </reaction>
</comment>
<comment type="catalytic activity">
    <reaction evidence="1">
        <text>a ribonucleoside 5'-diphosphate + ATP = a ribonucleoside 5'-triphosphate + ADP</text>
        <dbReference type="Rhea" id="RHEA:18113"/>
        <dbReference type="ChEBI" id="CHEBI:30616"/>
        <dbReference type="ChEBI" id="CHEBI:57930"/>
        <dbReference type="ChEBI" id="CHEBI:61557"/>
        <dbReference type="ChEBI" id="CHEBI:456216"/>
        <dbReference type="EC" id="2.7.4.6"/>
    </reaction>
</comment>
<comment type="cofactor">
    <cofactor evidence="1">
        <name>Mg(2+)</name>
        <dbReference type="ChEBI" id="CHEBI:18420"/>
    </cofactor>
</comment>
<comment type="subunit">
    <text evidence="1">Homotetramer.</text>
</comment>
<comment type="subcellular location">
    <subcellularLocation>
        <location evidence="1">Cytoplasm</location>
    </subcellularLocation>
</comment>
<comment type="similarity">
    <text evidence="1">Belongs to the NDK family.</text>
</comment>
<keyword id="KW-0067">ATP-binding</keyword>
<keyword id="KW-0963">Cytoplasm</keyword>
<keyword id="KW-0418">Kinase</keyword>
<keyword id="KW-0460">Magnesium</keyword>
<keyword id="KW-0479">Metal-binding</keyword>
<keyword id="KW-0546">Nucleotide metabolism</keyword>
<keyword id="KW-0547">Nucleotide-binding</keyword>
<keyword id="KW-0597">Phosphoprotein</keyword>
<keyword id="KW-0808">Transferase</keyword>
<proteinExistence type="inferred from homology"/>
<gene>
    <name evidence="1" type="primary">ndk</name>
    <name type="ordered locus">RPE_3287</name>
</gene>
<dbReference type="EC" id="2.7.4.6" evidence="1"/>
<dbReference type="EMBL" id="CP000463">
    <property type="protein sequence ID" value="ABJ07220.1"/>
    <property type="molecule type" value="Genomic_DNA"/>
</dbReference>
<dbReference type="SMR" id="Q07LG4"/>
<dbReference type="STRING" id="316055.RPE_3287"/>
<dbReference type="KEGG" id="rpe:RPE_3287"/>
<dbReference type="eggNOG" id="COG0105">
    <property type="taxonomic scope" value="Bacteria"/>
</dbReference>
<dbReference type="HOGENOM" id="CLU_060216_8_1_5"/>
<dbReference type="OrthoDB" id="9801161at2"/>
<dbReference type="GO" id="GO:0005737">
    <property type="term" value="C:cytoplasm"/>
    <property type="evidence" value="ECO:0007669"/>
    <property type="project" value="UniProtKB-SubCell"/>
</dbReference>
<dbReference type="GO" id="GO:0005524">
    <property type="term" value="F:ATP binding"/>
    <property type="evidence" value="ECO:0007669"/>
    <property type="project" value="UniProtKB-UniRule"/>
</dbReference>
<dbReference type="GO" id="GO:0046872">
    <property type="term" value="F:metal ion binding"/>
    <property type="evidence" value="ECO:0007669"/>
    <property type="project" value="UniProtKB-KW"/>
</dbReference>
<dbReference type="GO" id="GO:0004550">
    <property type="term" value="F:nucleoside diphosphate kinase activity"/>
    <property type="evidence" value="ECO:0007669"/>
    <property type="project" value="UniProtKB-UniRule"/>
</dbReference>
<dbReference type="GO" id="GO:0006241">
    <property type="term" value="P:CTP biosynthetic process"/>
    <property type="evidence" value="ECO:0007669"/>
    <property type="project" value="UniProtKB-UniRule"/>
</dbReference>
<dbReference type="GO" id="GO:0006183">
    <property type="term" value="P:GTP biosynthetic process"/>
    <property type="evidence" value="ECO:0007669"/>
    <property type="project" value="UniProtKB-UniRule"/>
</dbReference>
<dbReference type="GO" id="GO:0006228">
    <property type="term" value="P:UTP biosynthetic process"/>
    <property type="evidence" value="ECO:0007669"/>
    <property type="project" value="UniProtKB-UniRule"/>
</dbReference>
<dbReference type="CDD" id="cd04413">
    <property type="entry name" value="NDPk_I"/>
    <property type="match status" value="1"/>
</dbReference>
<dbReference type="FunFam" id="3.30.70.141:FF:000001">
    <property type="entry name" value="Nucleoside diphosphate kinase"/>
    <property type="match status" value="1"/>
</dbReference>
<dbReference type="Gene3D" id="3.30.70.141">
    <property type="entry name" value="Nucleoside diphosphate kinase-like domain"/>
    <property type="match status" value="1"/>
</dbReference>
<dbReference type="HAMAP" id="MF_00451">
    <property type="entry name" value="NDP_kinase"/>
    <property type="match status" value="1"/>
</dbReference>
<dbReference type="InterPro" id="IPR034907">
    <property type="entry name" value="NDK-like_dom"/>
</dbReference>
<dbReference type="InterPro" id="IPR036850">
    <property type="entry name" value="NDK-like_dom_sf"/>
</dbReference>
<dbReference type="InterPro" id="IPR001564">
    <property type="entry name" value="Nucleoside_diP_kinase"/>
</dbReference>
<dbReference type="InterPro" id="IPR023005">
    <property type="entry name" value="Nucleoside_diP_kinase_AS"/>
</dbReference>
<dbReference type="NCBIfam" id="NF001908">
    <property type="entry name" value="PRK00668.1"/>
    <property type="match status" value="1"/>
</dbReference>
<dbReference type="PANTHER" id="PTHR46161">
    <property type="entry name" value="NUCLEOSIDE DIPHOSPHATE KINASE"/>
    <property type="match status" value="1"/>
</dbReference>
<dbReference type="PANTHER" id="PTHR46161:SF3">
    <property type="entry name" value="NUCLEOSIDE DIPHOSPHATE KINASE DDB_G0292928-RELATED"/>
    <property type="match status" value="1"/>
</dbReference>
<dbReference type="Pfam" id="PF00334">
    <property type="entry name" value="NDK"/>
    <property type="match status" value="1"/>
</dbReference>
<dbReference type="PRINTS" id="PR01243">
    <property type="entry name" value="NUCDPKINASE"/>
</dbReference>
<dbReference type="SMART" id="SM00562">
    <property type="entry name" value="NDK"/>
    <property type="match status" value="1"/>
</dbReference>
<dbReference type="SUPFAM" id="SSF54919">
    <property type="entry name" value="Nucleoside diphosphate kinase, NDK"/>
    <property type="match status" value="1"/>
</dbReference>
<dbReference type="PROSITE" id="PS00469">
    <property type="entry name" value="NDPK"/>
    <property type="match status" value="1"/>
</dbReference>
<dbReference type="PROSITE" id="PS51374">
    <property type="entry name" value="NDPK_LIKE"/>
    <property type="match status" value="1"/>
</dbReference>
<evidence type="ECO:0000255" key="1">
    <source>
        <dbReference type="HAMAP-Rule" id="MF_00451"/>
    </source>
</evidence>
<reference key="1">
    <citation type="submission" date="2006-09" db="EMBL/GenBank/DDBJ databases">
        <title>Complete sequence of Rhodopseudomonas palustris BisA53.</title>
        <authorList>
            <consortium name="US DOE Joint Genome Institute"/>
            <person name="Copeland A."/>
            <person name="Lucas S."/>
            <person name="Lapidus A."/>
            <person name="Barry K."/>
            <person name="Detter J.C."/>
            <person name="Glavina del Rio T."/>
            <person name="Hammon N."/>
            <person name="Israni S."/>
            <person name="Dalin E."/>
            <person name="Tice H."/>
            <person name="Pitluck S."/>
            <person name="Chain P."/>
            <person name="Malfatti S."/>
            <person name="Shin M."/>
            <person name="Vergez L."/>
            <person name="Schmutz J."/>
            <person name="Larimer F."/>
            <person name="Land M."/>
            <person name="Hauser L."/>
            <person name="Pelletier D.A."/>
            <person name="Kyrpides N."/>
            <person name="Kim E."/>
            <person name="Harwood C.S."/>
            <person name="Oda Y."/>
            <person name="Richardson P."/>
        </authorList>
    </citation>
    <scope>NUCLEOTIDE SEQUENCE [LARGE SCALE GENOMIC DNA]</scope>
    <source>
        <strain>BisA53</strain>
    </source>
</reference>
<sequence length="140" mass="15247">MAVQRTFSILKPDATERNLTGAINALIEKAGLRIVAQKRIRMTREQAETFYAVHKERPFFGELVDFMISGPVVVQVLEGEDAVLKHRDVMGATDPSKAADGTIRKLHAKSIGENSVHGSDAPETAAIEIAQFFSGNEIVG</sequence>
<protein>
    <recommendedName>
        <fullName evidence="1">Nucleoside diphosphate kinase</fullName>
        <shortName evidence="1">NDK</shortName>
        <shortName evidence="1">NDP kinase</shortName>
        <ecNumber evidence="1">2.7.4.6</ecNumber>
    </recommendedName>
    <alternativeName>
        <fullName evidence="1">Nucleoside-2-P kinase</fullName>
    </alternativeName>
</protein>